<sequence length="45" mass="5416">MTKRTFGGTSRKRKRVSGFRVRMRSHTGRRVVRTRRKRGRSRLTV</sequence>
<protein>
    <recommendedName>
        <fullName evidence="1">Large ribosomal subunit protein bL34</fullName>
    </recommendedName>
    <alternativeName>
        <fullName evidence="3">50S ribosomal protein L34</fullName>
    </alternativeName>
</protein>
<organism>
    <name type="scientific">Prochlorococcus marinus (strain NATL2A)</name>
    <dbReference type="NCBI Taxonomy" id="59920"/>
    <lineage>
        <taxon>Bacteria</taxon>
        <taxon>Bacillati</taxon>
        <taxon>Cyanobacteriota</taxon>
        <taxon>Cyanophyceae</taxon>
        <taxon>Synechococcales</taxon>
        <taxon>Prochlorococcaceae</taxon>
        <taxon>Prochlorococcus</taxon>
    </lineage>
</organism>
<proteinExistence type="inferred from homology"/>
<evidence type="ECO:0000255" key="1">
    <source>
        <dbReference type="HAMAP-Rule" id="MF_00391"/>
    </source>
</evidence>
<evidence type="ECO:0000256" key="2">
    <source>
        <dbReference type="SAM" id="MobiDB-lite"/>
    </source>
</evidence>
<evidence type="ECO:0000305" key="3"/>
<name>RL34_PROMT</name>
<feature type="chain" id="PRO_1000013404" description="Large ribosomal subunit protein bL34">
    <location>
        <begin position="1"/>
        <end position="45"/>
    </location>
</feature>
<feature type="region of interest" description="Disordered" evidence="2">
    <location>
        <begin position="1"/>
        <end position="45"/>
    </location>
</feature>
<feature type="compositionally biased region" description="Basic residues" evidence="2">
    <location>
        <begin position="10"/>
        <end position="45"/>
    </location>
</feature>
<keyword id="KW-1185">Reference proteome</keyword>
<keyword id="KW-0687">Ribonucleoprotein</keyword>
<keyword id="KW-0689">Ribosomal protein</keyword>
<accession>Q46JN5</accession>
<dbReference type="EMBL" id="CP000095">
    <property type="protein sequence ID" value="AAZ58293.1"/>
    <property type="molecule type" value="Genomic_DNA"/>
</dbReference>
<dbReference type="RefSeq" id="WP_011294890.1">
    <property type="nucleotide sequence ID" value="NC_007335.2"/>
</dbReference>
<dbReference type="SMR" id="Q46JN5"/>
<dbReference type="STRING" id="59920.PMN2A_0802"/>
<dbReference type="KEGG" id="pmn:PMN2A_0802"/>
<dbReference type="HOGENOM" id="CLU_129938_2_1_3"/>
<dbReference type="Proteomes" id="UP000002535">
    <property type="component" value="Chromosome"/>
</dbReference>
<dbReference type="GO" id="GO:1990904">
    <property type="term" value="C:ribonucleoprotein complex"/>
    <property type="evidence" value="ECO:0007669"/>
    <property type="project" value="UniProtKB-KW"/>
</dbReference>
<dbReference type="GO" id="GO:0005840">
    <property type="term" value="C:ribosome"/>
    <property type="evidence" value="ECO:0007669"/>
    <property type="project" value="UniProtKB-KW"/>
</dbReference>
<dbReference type="GO" id="GO:0003735">
    <property type="term" value="F:structural constituent of ribosome"/>
    <property type="evidence" value="ECO:0007669"/>
    <property type="project" value="InterPro"/>
</dbReference>
<dbReference type="GO" id="GO:0006412">
    <property type="term" value="P:translation"/>
    <property type="evidence" value="ECO:0007669"/>
    <property type="project" value="UniProtKB-UniRule"/>
</dbReference>
<dbReference type="Gene3D" id="1.10.287.3980">
    <property type="match status" value="1"/>
</dbReference>
<dbReference type="HAMAP" id="MF_00391">
    <property type="entry name" value="Ribosomal_bL34"/>
    <property type="match status" value="1"/>
</dbReference>
<dbReference type="InterPro" id="IPR000271">
    <property type="entry name" value="Ribosomal_bL34"/>
</dbReference>
<dbReference type="InterPro" id="IPR020939">
    <property type="entry name" value="Ribosomal_bL34_CS"/>
</dbReference>
<dbReference type="NCBIfam" id="TIGR01030">
    <property type="entry name" value="rpmH_bact"/>
    <property type="match status" value="1"/>
</dbReference>
<dbReference type="Pfam" id="PF00468">
    <property type="entry name" value="Ribosomal_L34"/>
    <property type="match status" value="1"/>
</dbReference>
<dbReference type="PROSITE" id="PS00784">
    <property type="entry name" value="RIBOSOMAL_L34"/>
    <property type="match status" value="1"/>
</dbReference>
<gene>
    <name evidence="1" type="primary">rpmH</name>
    <name evidence="1" type="synonym">rpl34</name>
    <name type="ordered locus">PMN2A_0802</name>
</gene>
<reference key="1">
    <citation type="journal article" date="2007" name="PLoS Genet.">
        <title>Patterns and implications of gene gain and loss in the evolution of Prochlorococcus.</title>
        <authorList>
            <person name="Kettler G.C."/>
            <person name="Martiny A.C."/>
            <person name="Huang K."/>
            <person name="Zucker J."/>
            <person name="Coleman M.L."/>
            <person name="Rodrigue S."/>
            <person name="Chen F."/>
            <person name="Lapidus A."/>
            <person name="Ferriera S."/>
            <person name="Johnson J."/>
            <person name="Steglich C."/>
            <person name="Church G.M."/>
            <person name="Richardson P."/>
            <person name="Chisholm S.W."/>
        </authorList>
    </citation>
    <scope>NUCLEOTIDE SEQUENCE [LARGE SCALE GENOMIC DNA]</scope>
    <source>
        <strain>NATL2A</strain>
    </source>
</reference>
<comment type="similarity">
    <text evidence="1">Belongs to the bacterial ribosomal protein bL34 family.</text>
</comment>